<protein>
    <recommendedName>
        <fullName>T-complex protein 1 subunit gamma</fullName>
        <shortName>TCP-1-gamma</shortName>
    </recommendedName>
    <alternativeName>
        <fullName>CCT-gamma</fullName>
    </alternativeName>
</protein>
<comment type="function">
    <text>Molecular chaperone; assists the folding of proteins upon ATP hydrolysis. Known to play a role, in vitro, in the folding of actin and tubulin. In yeast may play a role in mitotic spindle formation.</text>
</comment>
<comment type="subunit">
    <text>Heterooligomeric complex of about 850 to 900 kDa that forms two stacked rings, 12 to 16 nm in diameter.</text>
</comment>
<comment type="subcellular location">
    <subcellularLocation>
        <location>Cytoplasm</location>
    </subcellularLocation>
</comment>
<comment type="similarity">
    <text evidence="2">Belongs to the TCP-1 chaperonin family.</text>
</comment>
<evidence type="ECO:0000250" key="1"/>
<evidence type="ECO:0000305" key="2"/>
<evidence type="ECO:0007744" key="3">
    <source>
    </source>
</evidence>
<evidence type="ECO:0007744" key="4">
    <source>
    </source>
</evidence>
<evidence type="ECO:0007829" key="5">
    <source>
        <dbReference type="PDB" id="6KS6"/>
    </source>
</evidence>
<evidence type="ECO:0007829" key="6">
    <source>
        <dbReference type="PDB" id="7YLY"/>
    </source>
</evidence>
<keyword id="KW-0002">3D-structure</keyword>
<keyword id="KW-0007">Acetylation</keyword>
<keyword id="KW-0067">ATP-binding</keyword>
<keyword id="KW-0143">Chaperone</keyword>
<keyword id="KW-0963">Cytoplasm</keyword>
<keyword id="KW-1015">Disulfide bond</keyword>
<keyword id="KW-0547">Nucleotide-binding</keyword>
<keyword id="KW-0597">Phosphoprotein</keyword>
<keyword id="KW-1185">Reference proteome</keyword>
<reference key="1">
    <citation type="journal article" date="1994" name="Proc. Natl. Acad. Sci. U.S.A.">
        <title>Two yeast genes with similarity to TCP-1 are required for microtubule and actin function in vivo.</title>
        <authorList>
            <person name="Chen X."/>
            <person name="Sullivan D.S."/>
            <person name="Huffaker T.C."/>
        </authorList>
    </citation>
    <scope>NUCLEOTIDE SEQUENCE [GENOMIC DNA]</scope>
</reference>
<reference key="2">
    <citation type="journal article" date="1996" name="EMBO J.">
        <title>Complete nucleotide sequence of Saccharomyces cerevisiae chromosome X.</title>
        <authorList>
            <person name="Galibert F."/>
            <person name="Alexandraki D."/>
            <person name="Baur A."/>
            <person name="Boles E."/>
            <person name="Chalwatzis N."/>
            <person name="Chuat J.-C."/>
            <person name="Coster F."/>
            <person name="Cziepluch C."/>
            <person name="de Haan M."/>
            <person name="Domdey H."/>
            <person name="Durand P."/>
            <person name="Entian K.-D."/>
            <person name="Gatius M."/>
            <person name="Goffeau A."/>
            <person name="Grivell L.A."/>
            <person name="Hennemann A."/>
            <person name="Herbert C.J."/>
            <person name="Heumann K."/>
            <person name="Hilger F."/>
            <person name="Hollenberg C.P."/>
            <person name="Huang M.-E."/>
            <person name="Jacq C."/>
            <person name="Jauniaux J.-C."/>
            <person name="Katsoulou C."/>
            <person name="Kirchrath L."/>
            <person name="Kleine K."/>
            <person name="Kordes E."/>
            <person name="Koetter P."/>
            <person name="Liebl S."/>
            <person name="Louis E.J."/>
            <person name="Manus V."/>
            <person name="Mewes H.-W."/>
            <person name="Miosga T."/>
            <person name="Obermaier B."/>
            <person name="Perea J."/>
            <person name="Pohl T.M."/>
            <person name="Portetelle D."/>
            <person name="Pujol A."/>
            <person name="Purnelle B."/>
            <person name="Ramezani Rad M."/>
            <person name="Rasmussen S.W."/>
            <person name="Rose M."/>
            <person name="Rossau R."/>
            <person name="Schaaff-Gerstenschlaeger I."/>
            <person name="Smits P.H.M."/>
            <person name="Scarcez T."/>
            <person name="Soriano N."/>
            <person name="To Van D."/>
            <person name="Tzermia M."/>
            <person name="Van Broekhoven A."/>
            <person name="Vandenbol M."/>
            <person name="Wedler H."/>
            <person name="von Wettstein D."/>
            <person name="Wambutt R."/>
            <person name="Zagulski M."/>
            <person name="Zollner A."/>
            <person name="Karpfinger-Hartl L."/>
        </authorList>
    </citation>
    <scope>NUCLEOTIDE SEQUENCE [LARGE SCALE GENOMIC DNA]</scope>
    <source>
        <strain>ATCC 204508 / S288c</strain>
    </source>
</reference>
<reference key="3">
    <citation type="journal article" date="2014" name="G3 (Bethesda)">
        <title>The reference genome sequence of Saccharomyces cerevisiae: Then and now.</title>
        <authorList>
            <person name="Engel S.R."/>
            <person name="Dietrich F.S."/>
            <person name="Fisk D.G."/>
            <person name="Binkley G."/>
            <person name="Balakrishnan R."/>
            <person name="Costanzo M.C."/>
            <person name="Dwight S.S."/>
            <person name="Hitz B.C."/>
            <person name="Karra K."/>
            <person name="Nash R.S."/>
            <person name="Weng S."/>
            <person name="Wong E.D."/>
            <person name="Lloyd P."/>
            <person name="Skrzypek M.S."/>
            <person name="Miyasato S.R."/>
            <person name="Simison M."/>
            <person name="Cherry J.M."/>
        </authorList>
    </citation>
    <scope>GENOME REANNOTATION</scope>
    <source>
        <strain>ATCC 204508 / S288c</strain>
    </source>
</reference>
<reference key="4">
    <citation type="journal article" date="2007" name="J. Proteome Res.">
        <title>Large-scale phosphorylation analysis of alpha-factor-arrested Saccharomyces cerevisiae.</title>
        <authorList>
            <person name="Li X."/>
            <person name="Gerber S.A."/>
            <person name="Rudner A.D."/>
            <person name="Beausoleil S.A."/>
            <person name="Haas W."/>
            <person name="Villen J."/>
            <person name="Elias J.E."/>
            <person name="Gygi S.P."/>
        </authorList>
    </citation>
    <scope>IDENTIFICATION BY MASS SPECTROMETRY [LARGE SCALE ANALYSIS]</scope>
    <source>
        <strain>ADR376</strain>
    </source>
</reference>
<reference key="5">
    <citation type="journal article" date="2009" name="Science">
        <title>Global analysis of Cdk1 substrate phosphorylation sites provides insights into evolution.</title>
        <authorList>
            <person name="Holt L.J."/>
            <person name="Tuch B.B."/>
            <person name="Villen J."/>
            <person name="Johnson A.D."/>
            <person name="Gygi S.P."/>
            <person name="Morgan D.O."/>
        </authorList>
    </citation>
    <scope>PHOSPHORYLATION [LARGE SCALE ANALYSIS] AT SER-257</scope>
    <scope>IDENTIFICATION BY MASS SPECTROMETRY [LARGE SCALE ANALYSIS]</scope>
</reference>
<reference key="6">
    <citation type="journal article" date="2012" name="Proc. Natl. Acad. Sci. U.S.A.">
        <title>N-terminal acetylome analyses and functional insights of the N-terminal acetyltransferase NatB.</title>
        <authorList>
            <person name="Van Damme P."/>
            <person name="Lasa M."/>
            <person name="Polevoda B."/>
            <person name="Gazquez C."/>
            <person name="Elosegui-Artola A."/>
            <person name="Kim D.S."/>
            <person name="De Juan-Pardo E."/>
            <person name="Demeyer K."/>
            <person name="Hole K."/>
            <person name="Larrea E."/>
            <person name="Timmerman E."/>
            <person name="Prieto J."/>
            <person name="Arnesen T."/>
            <person name="Sherman F."/>
            <person name="Gevaert K."/>
            <person name="Aldabe R."/>
        </authorList>
    </citation>
    <scope>ACETYLATION [LARGE SCALE ANALYSIS] AT MET-1</scope>
    <scope>IDENTIFICATION BY MASS SPECTROMETRY [LARGE SCALE ANALYSIS]</scope>
</reference>
<accession>P39077</accession>
<accession>D6VWG3</accession>
<proteinExistence type="evidence at protein level"/>
<organism>
    <name type="scientific">Saccharomyces cerevisiae (strain ATCC 204508 / S288c)</name>
    <name type="common">Baker's yeast</name>
    <dbReference type="NCBI Taxonomy" id="559292"/>
    <lineage>
        <taxon>Eukaryota</taxon>
        <taxon>Fungi</taxon>
        <taxon>Dikarya</taxon>
        <taxon>Ascomycota</taxon>
        <taxon>Saccharomycotina</taxon>
        <taxon>Saccharomycetes</taxon>
        <taxon>Saccharomycetales</taxon>
        <taxon>Saccharomycetaceae</taxon>
        <taxon>Saccharomyces</taxon>
    </lineage>
</organism>
<name>TCPG_YEAST</name>
<dbReference type="EMBL" id="U09480">
    <property type="protein sequence ID" value="AAA21658.1"/>
    <property type="molecule type" value="Genomic_DNA"/>
</dbReference>
<dbReference type="EMBL" id="Z49289">
    <property type="protein sequence ID" value="CAA89305.1"/>
    <property type="molecule type" value="Genomic_DNA"/>
</dbReference>
<dbReference type="EMBL" id="BK006943">
    <property type="protein sequence ID" value="DAA08779.1"/>
    <property type="molecule type" value="Genomic_DNA"/>
</dbReference>
<dbReference type="PIR" id="S56785">
    <property type="entry name" value="S56785"/>
</dbReference>
<dbReference type="RefSeq" id="NP_012520.1">
    <property type="nucleotide sequence ID" value="NM_001181448.1"/>
</dbReference>
<dbReference type="PDB" id="4V81">
    <property type="method" value="X-ray"/>
    <property type="resolution" value="3.80 A"/>
    <property type="chains" value="C/K/c/k=1-534"/>
</dbReference>
<dbReference type="PDB" id="4V8R">
    <property type="method" value="X-ray"/>
    <property type="resolution" value="3.80 A"/>
    <property type="chains" value="AG/Ag/BG/Bg=1-534"/>
</dbReference>
<dbReference type="PDB" id="4V94">
    <property type="method" value="X-ray"/>
    <property type="resolution" value="3.80 A"/>
    <property type="chains" value="C/K/c/k=1-534"/>
</dbReference>
<dbReference type="PDB" id="5GW4">
    <property type="method" value="EM"/>
    <property type="resolution" value="4.70 A"/>
    <property type="chains" value="G/g=1-534"/>
</dbReference>
<dbReference type="PDB" id="5GW5">
    <property type="method" value="EM"/>
    <property type="resolution" value="4.60 A"/>
    <property type="chains" value="G/g=1-534"/>
</dbReference>
<dbReference type="PDB" id="6KRD">
    <property type="method" value="EM"/>
    <property type="resolution" value="4.38 A"/>
    <property type="chains" value="G/g=1-534"/>
</dbReference>
<dbReference type="PDB" id="6KRE">
    <property type="method" value="EM"/>
    <property type="resolution" value="4.45 A"/>
    <property type="chains" value="G/g=1-534"/>
</dbReference>
<dbReference type="PDB" id="6KS6">
    <property type="method" value="EM"/>
    <property type="resolution" value="2.99 A"/>
    <property type="chains" value="G/g=1-534"/>
</dbReference>
<dbReference type="PDB" id="6KS7">
    <property type="method" value="EM"/>
    <property type="resolution" value="4.62 A"/>
    <property type="chains" value="G/g=1-534"/>
</dbReference>
<dbReference type="PDB" id="6KS8">
    <property type="method" value="EM"/>
    <property type="resolution" value="4.69 A"/>
    <property type="chains" value="G/g=1-534"/>
</dbReference>
<dbReference type="PDB" id="7YLU">
    <property type="method" value="EM"/>
    <property type="resolution" value="4.55 A"/>
    <property type="chains" value="G/g=1-534"/>
</dbReference>
<dbReference type="PDB" id="7YLV">
    <property type="method" value="EM"/>
    <property type="resolution" value="3.91 A"/>
    <property type="chains" value="G/g=1-534"/>
</dbReference>
<dbReference type="PDB" id="7YLW">
    <property type="method" value="EM"/>
    <property type="resolution" value="3.39 A"/>
    <property type="chains" value="G/g=1-534"/>
</dbReference>
<dbReference type="PDB" id="7YLX">
    <property type="method" value="EM"/>
    <property type="resolution" value="3.20 A"/>
    <property type="chains" value="G/g=1-534"/>
</dbReference>
<dbReference type="PDB" id="7YLY">
    <property type="method" value="EM"/>
    <property type="resolution" value="3.05 A"/>
    <property type="chains" value="G/g=1-534"/>
</dbReference>
<dbReference type="PDB" id="9CR2">
    <property type="method" value="EM"/>
    <property type="resolution" value="4.80 A"/>
    <property type="chains" value="G/g=1-534"/>
</dbReference>
<dbReference type="PDB" id="9CS3">
    <property type="method" value="EM"/>
    <property type="resolution" value="5.60 A"/>
    <property type="chains" value="G/g=1-534"/>
</dbReference>
<dbReference type="PDB" id="9CS4">
    <property type="method" value="EM"/>
    <property type="resolution" value="6.80 A"/>
    <property type="chains" value="G/g=1-534"/>
</dbReference>
<dbReference type="PDB" id="9CS6">
    <property type="method" value="EM"/>
    <property type="resolution" value="4.10 A"/>
    <property type="chains" value="G/g=1-534"/>
</dbReference>
<dbReference type="PDB" id="9CSA">
    <property type="method" value="EM"/>
    <property type="resolution" value="3.60 A"/>
    <property type="chains" value="G/g=1-534"/>
</dbReference>
<dbReference type="PDBsum" id="4V81"/>
<dbReference type="PDBsum" id="4V8R"/>
<dbReference type="PDBsum" id="4V94"/>
<dbReference type="PDBsum" id="5GW4"/>
<dbReference type="PDBsum" id="5GW5"/>
<dbReference type="PDBsum" id="6KRD"/>
<dbReference type="PDBsum" id="6KRE"/>
<dbReference type="PDBsum" id="6KS6"/>
<dbReference type="PDBsum" id="6KS7"/>
<dbReference type="PDBsum" id="6KS8"/>
<dbReference type="PDBsum" id="7YLU"/>
<dbReference type="PDBsum" id="7YLV"/>
<dbReference type="PDBsum" id="7YLW"/>
<dbReference type="PDBsum" id="7YLX"/>
<dbReference type="PDBsum" id="7YLY"/>
<dbReference type="PDBsum" id="9CR2"/>
<dbReference type="PDBsum" id="9CS3"/>
<dbReference type="PDBsum" id="9CS4"/>
<dbReference type="PDBsum" id="9CS6"/>
<dbReference type="PDBsum" id="9CSA"/>
<dbReference type="EMDB" id="EMD-0756"/>
<dbReference type="EMDB" id="EMD-0757"/>
<dbReference type="EMDB" id="EMD-0758"/>
<dbReference type="EMDB" id="EMD-0759"/>
<dbReference type="EMDB" id="EMD-0760"/>
<dbReference type="EMDB" id="EMD-33917"/>
<dbReference type="EMDB" id="EMD-33918"/>
<dbReference type="EMDB" id="EMD-33919"/>
<dbReference type="EMDB" id="EMD-33920"/>
<dbReference type="EMDB" id="EMD-33921"/>
<dbReference type="EMDB" id="EMD-45830"/>
<dbReference type="EMDB" id="EMD-45886"/>
<dbReference type="EMDB" id="EMD-45887"/>
<dbReference type="EMDB" id="EMD-45888"/>
<dbReference type="EMDB" id="EMD-45889"/>
<dbReference type="EMDB" id="EMD-9540"/>
<dbReference type="EMDB" id="EMD-9541"/>
<dbReference type="SMR" id="P39077"/>
<dbReference type="BioGRID" id="33741">
    <property type="interactions" value="323"/>
</dbReference>
<dbReference type="ComplexPortal" id="CPX-2156">
    <property type="entry name" value="Chaperonin-containing T-complex"/>
</dbReference>
<dbReference type="DIP" id="DIP-6400N"/>
<dbReference type="FunCoup" id="P39077">
    <property type="interactions" value="1591"/>
</dbReference>
<dbReference type="IntAct" id="P39077">
    <property type="interactions" value="54"/>
</dbReference>
<dbReference type="MINT" id="P39077"/>
<dbReference type="STRING" id="4932.YJL014W"/>
<dbReference type="CarbonylDB" id="P39077"/>
<dbReference type="iPTMnet" id="P39077"/>
<dbReference type="PaxDb" id="4932-YJL014W"/>
<dbReference type="PeptideAtlas" id="P39077"/>
<dbReference type="DNASU" id="853438"/>
<dbReference type="EnsemblFungi" id="YJL014W_mRNA">
    <property type="protein sequence ID" value="YJL014W"/>
    <property type="gene ID" value="YJL014W"/>
</dbReference>
<dbReference type="GeneID" id="853438"/>
<dbReference type="KEGG" id="sce:YJL014W"/>
<dbReference type="AGR" id="SGD:S000003551"/>
<dbReference type="SGD" id="S000003551">
    <property type="gene designation" value="CCT3"/>
</dbReference>
<dbReference type="VEuPathDB" id="FungiDB:YJL014W"/>
<dbReference type="eggNOG" id="KOG0364">
    <property type="taxonomic scope" value="Eukaryota"/>
</dbReference>
<dbReference type="GeneTree" id="ENSGT00570000079224"/>
<dbReference type="HOGENOM" id="CLU_008891_7_3_1"/>
<dbReference type="InParanoid" id="P39077"/>
<dbReference type="OMA" id="CGGSTIR"/>
<dbReference type="OrthoDB" id="10248520at2759"/>
<dbReference type="BioCyc" id="YEAST:G3O-31489-MONOMER"/>
<dbReference type="BRENDA" id="3.6.4.B10">
    <property type="organism ID" value="984"/>
</dbReference>
<dbReference type="Reactome" id="R-SCE-390471">
    <property type="pathway name" value="Association of TriC/CCT with target proteins during biosynthesis"/>
</dbReference>
<dbReference type="Reactome" id="R-SCE-6814122">
    <property type="pathway name" value="Cooperation of PDCL (PhLP1) and TRiC/CCT in G-protein beta folding"/>
</dbReference>
<dbReference type="BioGRID-ORCS" id="853438">
    <property type="hits" value="0 hits in 10 CRISPR screens"/>
</dbReference>
<dbReference type="CD-CODE" id="E03F929F">
    <property type="entry name" value="Stress granule"/>
</dbReference>
<dbReference type="PRO" id="PR:P39077"/>
<dbReference type="Proteomes" id="UP000002311">
    <property type="component" value="Chromosome X"/>
</dbReference>
<dbReference type="RNAct" id="P39077">
    <property type="molecule type" value="protein"/>
</dbReference>
<dbReference type="GO" id="GO:0005832">
    <property type="term" value="C:chaperonin-containing T-complex"/>
    <property type="evidence" value="ECO:0000314"/>
    <property type="project" value="SGD"/>
</dbReference>
<dbReference type="GO" id="GO:0005524">
    <property type="term" value="F:ATP binding"/>
    <property type="evidence" value="ECO:0007669"/>
    <property type="project" value="UniProtKB-KW"/>
</dbReference>
<dbReference type="GO" id="GO:0016887">
    <property type="term" value="F:ATP hydrolysis activity"/>
    <property type="evidence" value="ECO:0007669"/>
    <property type="project" value="InterPro"/>
</dbReference>
<dbReference type="GO" id="GO:0140662">
    <property type="term" value="F:ATP-dependent protein folding chaperone"/>
    <property type="evidence" value="ECO:0007669"/>
    <property type="project" value="InterPro"/>
</dbReference>
<dbReference type="GO" id="GO:0051082">
    <property type="term" value="F:unfolded protein binding"/>
    <property type="evidence" value="ECO:0000314"/>
    <property type="project" value="SGD"/>
</dbReference>
<dbReference type="GO" id="GO:0051086">
    <property type="term" value="P:chaperone mediated protein folding independent of cofactor"/>
    <property type="evidence" value="ECO:0000314"/>
    <property type="project" value="ComplexPortal"/>
</dbReference>
<dbReference type="GO" id="GO:0006457">
    <property type="term" value="P:protein folding"/>
    <property type="evidence" value="ECO:0000314"/>
    <property type="project" value="SGD"/>
</dbReference>
<dbReference type="CDD" id="cd03337">
    <property type="entry name" value="TCP1_gamma"/>
    <property type="match status" value="1"/>
</dbReference>
<dbReference type="FunFam" id="1.10.560.10:FF:000085">
    <property type="entry name" value="T-complex protein 1 subunit gamma"/>
    <property type="match status" value="1"/>
</dbReference>
<dbReference type="FunFam" id="3.50.7.10:FF:000005">
    <property type="entry name" value="T-complex protein 1 subunit gamma"/>
    <property type="match status" value="1"/>
</dbReference>
<dbReference type="Gene3D" id="3.50.7.10">
    <property type="entry name" value="GroEL"/>
    <property type="match status" value="1"/>
</dbReference>
<dbReference type="Gene3D" id="1.10.560.10">
    <property type="entry name" value="GroEL-like equatorial domain"/>
    <property type="match status" value="1"/>
</dbReference>
<dbReference type="Gene3D" id="3.30.260.10">
    <property type="entry name" value="TCP-1-like chaperonin intermediate domain"/>
    <property type="match status" value="1"/>
</dbReference>
<dbReference type="InterPro" id="IPR012719">
    <property type="entry name" value="Chap_CCT_gamma"/>
</dbReference>
<dbReference type="InterPro" id="IPR017998">
    <property type="entry name" value="Chaperone_TCP-1"/>
</dbReference>
<dbReference type="InterPro" id="IPR002194">
    <property type="entry name" value="Chaperonin_TCP-1_CS"/>
</dbReference>
<dbReference type="InterPro" id="IPR002423">
    <property type="entry name" value="Cpn60/GroEL/TCP-1"/>
</dbReference>
<dbReference type="InterPro" id="IPR027409">
    <property type="entry name" value="GroEL-like_apical_dom_sf"/>
</dbReference>
<dbReference type="InterPro" id="IPR027413">
    <property type="entry name" value="GROEL-like_equatorial_sf"/>
</dbReference>
<dbReference type="InterPro" id="IPR027410">
    <property type="entry name" value="TCP-1-like_intermed_sf"/>
</dbReference>
<dbReference type="InterPro" id="IPR053374">
    <property type="entry name" value="TCP-1_chaperonin"/>
</dbReference>
<dbReference type="InterPro" id="IPR054827">
    <property type="entry name" value="thermosome_alpha"/>
</dbReference>
<dbReference type="NCBIfam" id="TIGR02344">
    <property type="entry name" value="chap_CCT_gamma"/>
    <property type="match status" value="1"/>
</dbReference>
<dbReference type="NCBIfam" id="NF041082">
    <property type="entry name" value="thermosome_alpha"/>
    <property type="match status" value="1"/>
</dbReference>
<dbReference type="NCBIfam" id="NF041083">
    <property type="entry name" value="thermosome_beta"/>
    <property type="match status" value="1"/>
</dbReference>
<dbReference type="PANTHER" id="PTHR11353">
    <property type="entry name" value="CHAPERONIN"/>
    <property type="match status" value="1"/>
</dbReference>
<dbReference type="Pfam" id="PF00118">
    <property type="entry name" value="Cpn60_TCP1"/>
    <property type="match status" value="1"/>
</dbReference>
<dbReference type="PRINTS" id="PR00304">
    <property type="entry name" value="TCOMPLEXTCP1"/>
</dbReference>
<dbReference type="SUPFAM" id="SSF52029">
    <property type="entry name" value="GroEL apical domain-like"/>
    <property type="match status" value="1"/>
</dbReference>
<dbReference type="SUPFAM" id="SSF48592">
    <property type="entry name" value="GroEL equatorial domain-like"/>
    <property type="match status" value="1"/>
</dbReference>
<dbReference type="SUPFAM" id="SSF54849">
    <property type="entry name" value="GroEL-intermediate domain like"/>
    <property type="match status" value="1"/>
</dbReference>
<dbReference type="PROSITE" id="PS00750">
    <property type="entry name" value="TCP1_1"/>
    <property type="match status" value="1"/>
</dbReference>
<dbReference type="PROSITE" id="PS00751">
    <property type="entry name" value="TCP1_2"/>
    <property type="match status" value="1"/>
</dbReference>
<dbReference type="PROSITE" id="PS00995">
    <property type="entry name" value="TCP1_3"/>
    <property type="match status" value="1"/>
</dbReference>
<gene>
    <name type="primary">CCT3</name>
    <name type="synonym">BIN2</name>
    <name type="synonym">TCP3</name>
    <name type="ordered locus">YJL014W</name>
    <name type="ORF">J1336</name>
</gene>
<sequence>MQAPVVFMNASQERTTGRQAQISNITAAKAVADVIRTCLGPKAMLKMLLDPMGGLVLTNDGHAILREIDVAHPAAKSMLELSRTQDEEVGDGTTTVIILAGEILAQCAPYLIEKNIHPVIIIQALKKALTDALEVIKQVSKPVDVENDAAMKKLIQASIGTKYVIHWSEKMCELALDAVKTVRKDLGQTVEGEPNFEIDIKRYVRVEKIPGGDVLDSRVLKGVLLNKDVVHPKMSRHIENPRVVLLDCPLEYKKGESQTNIEIEKEEDWNRILQIEEEQVQLMCEQILAVRPTLVITEKGVSDLAQHYLLKGGCSVLRRVKKSDNNRIARVTGATIVNRVEDLKESDVGTNCGLFKVEMIGDEYFSFLDNCKEPKACTIMLRGGSKDILNEIDRNLQDAMAVARNVMLSPSLSPGGGATEMAVSVKLAEKAKQLEGIQQWPYQAVADAMECIPRTLIQNAGGDPIRLLSQLRAKHAQGNFTTGIDGDKGKIVDMVSYGIWEPEVIKQQSVKTAIESACLLLRVDDIVSGVRKQE</sequence>
<feature type="chain" id="PRO_0000128331" description="T-complex protein 1 subunit gamma">
    <location>
        <begin position="1"/>
        <end position="534"/>
    </location>
</feature>
<feature type="modified residue" description="N-acetylmethionine" evidence="4">
    <location>
        <position position="1"/>
    </location>
</feature>
<feature type="modified residue" description="Phosphoserine" evidence="3">
    <location>
        <position position="257"/>
    </location>
</feature>
<feature type="disulfide bond" evidence="1">
    <location>
        <begin position="371"/>
        <end position="377"/>
    </location>
</feature>
<feature type="sequence conflict" description="In Ref. 1; AAA21658." evidence="2" ref="1">
    <original>IT</original>
    <variation>HA</variation>
    <location>
        <begin position="25"/>
        <end position="26"/>
    </location>
</feature>
<feature type="sequence conflict" description="In Ref. 1; AAA21658." evidence="2" ref="1">
    <original>DEEV</original>
    <variation>ERRG</variation>
    <location>
        <begin position="86"/>
        <end position="89"/>
    </location>
</feature>
<feature type="sequence conflict" description="In Ref. 1; AAA21658." evidence="2" ref="1">
    <original>L</original>
    <variation>F</variation>
    <location>
        <position position="111"/>
    </location>
</feature>
<feature type="sequence conflict" description="In Ref. 1; AAA21658." evidence="2" ref="1">
    <original>K</original>
    <variation>M</variation>
    <location>
        <position position="265"/>
    </location>
</feature>
<feature type="sequence conflict" description="In Ref. 1; AAA21658." evidence="2" ref="1">
    <original>Q</original>
    <variation>L</variation>
    <location>
        <position position="274"/>
    </location>
</feature>
<feature type="sequence conflict" description="In Ref. 1; AAA21658." evidence="2" ref="1">
    <location>
        <position position="292"/>
    </location>
</feature>
<feature type="sequence conflict" description="In Ref. 1; AAA21658." evidence="2" ref="1">
    <original>G</original>
    <variation>A</variation>
    <location>
        <position position="478"/>
    </location>
</feature>
<feature type="strand" evidence="5">
    <location>
        <begin position="7"/>
        <end position="10"/>
    </location>
</feature>
<feature type="helix" evidence="5">
    <location>
        <begin position="18"/>
        <end position="34"/>
    </location>
</feature>
<feature type="helix" evidence="5">
    <location>
        <begin position="36"/>
        <end position="38"/>
    </location>
</feature>
<feature type="strand" evidence="5">
    <location>
        <begin position="45"/>
        <end position="49"/>
    </location>
</feature>
<feature type="strand" evidence="6">
    <location>
        <begin position="51"/>
        <end position="53"/>
    </location>
</feature>
<feature type="strand" evidence="5">
    <location>
        <begin position="55"/>
        <end position="58"/>
    </location>
</feature>
<feature type="helix" evidence="5">
    <location>
        <begin position="61"/>
        <end position="66"/>
    </location>
</feature>
<feature type="helix" evidence="5">
    <location>
        <begin position="73"/>
        <end position="79"/>
    </location>
</feature>
<feature type="helix" evidence="5">
    <location>
        <begin position="81"/>
        <end position="88"/>
    </location>
</feature>
<feature type="helix" evidence="5">
    <location>
        <begin position="93"/>
        <end position="107"/>
    </location>
</feature>
<feature type="turn" evidence="5">
    <location>
        <begin position="109"/>
        <end position="114"/>
    </location>
</feature>
<feature type="helix" evidence="5">
    <location>
        <begin position="118"/>
        <end position="139"/>
    </location>
</feature>
<feature type="helix" evidence="5">
    <location>
        <begin position="148"/>
        <end position="159"/>
    </location>
</feature>
<feature type="helix" evidence="5">
    <location>
        <begin position="163"/>
        <end position="167"/>
    </location>
</feature>
<feature type="helix" evidence="5">
    <location>
        <begin position="168"/>
        <end position="182"/>
    </location>
</feature>
<feature type="helix" evidence="5">
    <location>
        <begin position="201"/>
        <end position="203"/>
    </location>
</feature>
<feature type="strand" evidence="5">
    <location>
        <begin position="204"/>
        <end position="209"/>
    </location>
</feature>
<feature type="strand" evidence="5">
    <location>
        <begin position="214"/>
        <end position="216"/>
    </location>
</feature>
<feature type="strand" evidence="5">
    <location>
        <begin position="218"/>
        <end position="220"/>
    </location>
</feature>
<feature type="strand" evidence="5">
    <location>
        <begin position="236"/>
        <end position="240"/>
    </location>
</feature>
<feature type="strand" evidence="5">
    <location>
        <begin position="243"/>
        <end position="246"/>
    </location>
</feature>
<feature type="strand" evidence="5">
    <location>
        <begin position="260"/>
        <end position="263"/>
    </location>
</feature>
<feature type="helix" evidence="5">
    <location>
        <begin position="266"/>
        <end position="287"/>
    </location>
</feature>
<feature type="turn" evidence="5">
    <location>
        <begin position="288"/>
        <end position="290"/>
    </location>
</feature>
<feature type="strand" evidence="5">
    <location>
        <begin position="293"/>
        <end position="299"/>
    </location>
</feature>
<feature type="helix" evidence="5">
    <location>
        <begin position="304"/>
        <end position="308"/>
    </location>
</feature>
<feature type="turn" evidence="5">
    <location>
        <begin position="309"/>
        <end position="313"/>
    </location>
</feature>
<feature type="strand" evidence="5">
    <location>
        <begin position="315"/>
        <end position="317"/>
    </location>
</feature>
<feature type="helix" evidence="5">
    <location>
        <begin position="322"/>
        <end position="332"/>
    </location>
</feature>
<feature type="helix" evidence="5">
    <location>
        <begin position="340"/>
        <end position="342"/>
    </location>
</feature>
<feature type="helix" evidence="5">
    <location>
        <begin position="345"/>
        <end position="347"/>
    </location>
</feature>
<feature type="strand" evidence="5">
    <location>
        <begin position="353"/>
        <end position="359"/>
    </location>
</feature>
<feature type="strand" evidence="5">
    <location>
        <begin position="364"/>
        <end position="369"/>
    </location>
</feature>
<feature type="strand" evidence="5">
    <location>
        <begin position="377"/>
        <end position="382"/>
    </location>
</feature>
<feature type="helix" evidence="5">
    <location>
        <begin position="386"/>
        <end position="408"/>
    </location>
</feature>
<feature type="strand" evidence="5">
    <location>
        <begin position="411"/>
        <end position="414"/>
    </location>
</feature>
<feature type="turn" evidence="6">
    <location>
        <begin position="415"/>
        <end position="417"/>
    </location>
</feature>
<feature type="helix" evidence="5">
    <location>
        <begin position="418"/>
        <end position="434"/>
    </location>
</feature>
<feature type="helix" evidence="5">
    <location>
        <begin position="439"/>
        <end position="448"/>
    </location>
</feature>
<feature type="helix" evidence="5">
    <location>
        <begin position="451"/>
        <end position="460"/>
    </location>
</feature>
<feature type="helix" evidence="5">
    <location>
        <begin position="464"/>
        <end position="475"/>
    </location>
</feature>
<feature type="turn" evidence="5">
    <location>
        <begin position="476"/>
        <end position="478"/>
    </location>
</feature>
<feature type="strand" evidence="6">
    <location>
        <begin position="480"/>
        <end position="484"/>
    </location>
</feature>
<feature type="strand" evidence="5">
    <location>
        <begin position="486"/>
        <end position="488"/>
    </location>
</feature>
<feature type="strand" evidence="6">
    <location>
        <begin position="490"/>
        <end position="493"/>
    </location>
</feature>
<feature type="helix" evidence="5">
    <location>
        <begin position="494"/>
        <end position="497"/>
    </location>
</feature>
<feature type="strand" evidence="5">
    <location>
        <begin position="500"/>
        <end position="502"/>
    </location>
</feature>
<feature type="helix" evidence="5">
    <location>
        <begin position="503"/>
        <end position="520"/>
    </location>
</feature>
<feature type="strand" evidence="5">
    <location>
        <begin position="523"/>
        <end position="527"/>
    </location>
</feature>